<keyword id="KW-0204">Cytolysis</keyword>
<keyword id="KW-1061">Dermonecrotic toxin</keyword>
<keyword id="KW-1015">Disulfide bond</keyword>
<keyword id="KW-0354">Hemolysis</keyword>
<keyword id="KW-0442">Lipid degradation</keyword>
<keyword id="KW-0443">Lipid metabolism</keyword>
<keyword id="KW-0456">Lyase</keyword>
<keyword id="KW-0460">Magnesium</keyword>
<keyword id="KW-0479">Metal-binding</keyword>
<keyword id="KW-0964">Secreted</keyword>
<keyword id="KW-0800">Toxin</keyword>
<sequence length="273" mass="31508">IMGHMVNAIEQVDEFLNLGANAIEFDIDFDKDGIAQITHHGIPCDCGRKCTKKAIFTEYLDNIRQVTTPDDPKFREQLVLLALDLKLQRISSAKAYRAGEDVAKKLLDHYWQRGNSRARAYILLNIPLVEDYEFIRAFKDTPKNEGYESYNDKVGINFTGNEDLDKIRDVLEILGIHKQVWQADGITSCLARGTERLKEALEKRDTPGYNYINKVYAWTLVRKSIMRRSLRLGVDGVMSNNPDRVIKVLKEKEFADKFRLATYNDNPWEKFRG</sequence>
<reference key="1">
    <citation type="journal article" date="2009" name="Mol. Biol. Evol.">
        <title>Molecular evolution, functional variation, and proposed nomenclature of the gene family that includes sphingomyelinase D in sicariid spider venoms.</title>
        <authorList>
            <person name="Binford G.J."/>
            <person name="Bodner M.R."/>
            <person name="Cordes M.H."/>
            <person name="Baldwin K.L."/>
            <person name="Rynerson M.R."/>
            <person name="Burns S.N."/>
            <person name="Zobel-Thropp P.A."/>
        </authorList>
    </citation>
    <scope>NUCLEOTIDE SEQUENCE [MRNA]</scope>
    <scope>NOMENCLATURE</scope>
    <source>
        <tissue>Venom gland</tissue>
    </source>
</reference>
<feature type="chain" id="PRO_0000392896" description="Dermonecrotic toxin SdSicTox-betaIIB1bxi">
    <location>
        <begin position="1" status="less than"/>
        <end position="273"/>
    </location>
</feature>
<feature type="active site" evidence="5">
    <location>
        <position position="4"/>
    </location>
</feature>
<feature type="active site" description="Nucleophile" evidence="5">
    <location>
        <position position="40"/>
    </location>
</feature>
<feature type="binding site" evidence="5">
    <location>
        <position position="24"/>
    </location>
    <ligand>
        <name>Mg(2+)</name>
        <dbReference type="ChEBI" id="CHEBI:18420"/>
    </ligand>
</feature>
<feature type="binding site" evidence="5">
    <location>
        <position position="26"/>
    </location>
    <ligand>
        <name>Mg(2+)</name>
        <dbReference type="ChEBI" id="CHEBI:18420"/>
    </ligand>
</feature>
<feature type="binding site" evidence="5">
    <location>
        <position position="84"/>
    </location>
    <ligand>
        <name>Mg(2+)</name>
        <dbReference type="ChEBI" id="CHEBI:18420"/>
    </ligand>
</feature>
<feature type="disulfide bond" evidence="3">
    <location>
        <begin position="44"/>
        <end position="50"/>
    </location>
</feature>
<feature type="disulfide bond" evidence="3">
    <location>
        <begin position="46"/>
        <end position="189"/>
    </location>
</feature>
<feature type="non-terminal residue">
    <location>
        <position position="1"/>
    </location>
</feature>
<comment type="function">
    <text evidence="1 3">Dermonecrotic toxins cleave the phosphodiester linkage between the phosphate and headgroup of certain phospholipids (sphingolipid and lysolipid substrates), forming an alcohol (often choline) and a cyclic phosphate (By similarity). This toxin acts on sphingomyelin (SM) (By similarity). It may also act on ceramide phosphoethanolamine (CPE), lysophosphatidylcholine (LPC) and lysophosphatidylethanolamine (LPE), but not on lysophosphatidylserine (LPS), and lysophosphatidylglycerol (LPG) (By similarity). It acts by transphosphatidylation, releasing exclusively cyclic phosphate products as second products (By similarity). Induces dermonecrosis, hemolysis, increased vascular permeability, edema, inflammatory response, and platelet aggregation (By similarity).</text>
</comment>
<comment type="catalytic activity">
    <reaction evidence="1">
        <text>an N-(acyl)-sphingosylphosphocholine = an N-(acyl)-sphingosyl-1,3-cyclic phosphate + choline</text>
        <dbReference type="Rhea" id="RHEA:60652"/>
        <dbReference type="ChEBI" id="CHEBI:15354"/>
        <dbReference type="ChEBI" id="CHEBI:64583"/>
        <dbReference type="ChEBI" id="CHEBI:143892"/>
    </reaction>
</comment>
<comment type="catalytic activity">
    <reaction evidence="1">
        <text>an N-(acyl)-sphingosylphosphoethanolamine = an N-(acyl)-sphingosyl-1,3-cyclic phosphate + ethanolamine</text>
        <dbReference type="Rhea" id="RHEA:60648"/>
        <dbReference type="ChEBI" id="CHEBI:57603"/>
        <dbReference type="ChEBI" id="CHEBI:143891"/>
        <dbReference type="ChEBI" id="CHEBI:143892"/>
    </reaction>
</comment>
<comment type="catalytic activity">
    <reaction evidence="1">
        <text>a 1-acyl-sn-glycero-3-phosphocholine = a 1-acyl-sn-glycero-2,3-cyclic phosphate + choline</text>
        <dbReference type="Rhea" id="RHEA:60700"/>
        <dbReference type="ChEBI" id="CHEBI:15354"/>
        <dbReference type="ChEBI" id="CHEBI:58168"/>
        <dbReference type="ChEBI" id="CHEBI:143947"/>
    </reaction>
</comment>
<comment type="catalytic activity">
    <reaction evidence="1">
        <text>a 1-acyl-sn-glycero-3-phosphoethanolamine = a 1-acyl-sn-glycero-2,3-cyclic phosphate + ethanolamine</text>
        <dbReference type="Rhea" id="RHEA:60704"/>
        <dbReference type="ChEBI" id="CHEBI:57603"/>
        <dbReference type="ChEBI" id="CHEBI:64381"/>
        <dbReference type="ChEBI" id="CHEBI:143947"/>
    </reaction>
</comment>
<comment type="cofactor">
    <cofactor evidence="5">
        <name>Mg(2+)</name>
        <dbReference type="ChEBI" id="CHEBI:18420"/>
    </cofactor>
    <text evidence="5">Binds 1 Mg(2+) ion per subunit.</text>
</comment>
<comment type="subcellular location">
    <subcellularLocation>
        <location evidence="8">Secreted</location>
    </subcellularLocation>
</comment>
<comment type="tissue specificity">
    <text evidence="8">Expressed by the venom gland.</text>
</comment>
<comment type="similarity">
    <text evidence="7">Belongs to the arthropod phospholipase D family. Class II subfamily.</text>
</comment>
<comment type="caution">
    <text evidence="1 2 4">The most common activity assay for dermonecrotic toxins detects enzymatic activity by monitoring choline release from substrate. Liberation of choline from sphingomyelin (SM) or lysophosphatidylcholine (LPC) is commonly assumed to result from substrate hydrolysis, giving either ceramide-1-phosphate (C1P) or lysophosphatidic acid (LPA), respectively, as a second product. However, two studies from Lajoie and colleagues (2013 and 2015) report the observation of exclusive formation of cyclic phosphate products as second products, resulting from intramolecular transphosphatidylation. Cyclic phosphates have vastly different biological properties from their monoester counterparts, and they may be relevant to the pathology of brown spider envenomation.</text>
</comment>
<accession>C0JB85</accession>
<evidence type="ECO:0000250" key="1">
    <source>
        <dbReference type="UniProtKB" id="A0A0D4WTV1"/>
    </source>
</evidence>
<evidence type="ECO:0000250" key="2">
    <source>
        <dbReference type="UniProtKB" id="A0A0D4WV12"/>
    </source>
</evidence>
<evidence type="ECO:0000250" key="3">
    <source>
        <dbReference type="UniProtKB" id="P0CE80"/>
    </source>
</evidence>
<evidence type="ECO:0000250" key="4">
    <source>
        <dbReference type="UniProtKB" id="Q4ZFU2"/>
    </source>
</evidence>
<evidence type="ECO:0000250" key="5">
    <source>
        <dbReference type="UniProtKB" id="Q8I914"/>
    </source>
</evidence>
<evidence type="ECO:0000303" key="6">
    <source>
    </source>
</evidence>
<evidence type="ECO:0000305" key="7"/>
<evidence type="ECO:0000305" key="8">
    <source>
    </source>
</evidence>
<name>B2KBB_SICCD</name>
<dbReference type="EC" id="4.6.1.-" evidence="4"/>
<dbReference type="EMBL" id="FJ171520">
    <property type="protein sequence ID" value="ACN49016.1"/>
    <property type="molecule type" value="mRNA"/>
</dbReference>
<dbReference type="SMR" id="C0JB85"/>
<dbReference type="GO" id="GO:0005576">
    <property type="term" value="C:extracellular region"/>
    <property type="evidence" value="ECO:0007669"/>
    <property type="project" value="UniProtKB-SubCell"/>
</dbReference>
<dbReference type="GO" id="GO:0016829">
    <property type="term" value="F:lyase activity"/>
    <property type="evidence" value="ECO:0007669"/>
    <property type="project" value="UniProtKB-KW"/>
</dbReference>
<dbReference type="GO" id="GO:0046872">
    <property type="term" value="F:metal ion binding"/>
    <property type="evidence" value="ECO:0007669"/>
    <property type="project" value="UniProtKB-KW"/>
</dbReference>
<dbReference type="GO" id="GO:0008081">
    <property type="term" value="F:phosphoric diester hydrolase activity"/>
    <property type="evidence" value="ECO:0007669"/>
    <property type="project" value="InterPro"/>
</dbReference>
<dbReference type="GO" id="GO:0090729">
    <property type="term" value="F:toxin activity"/>
    <property type="evidence" value="ECO:0007669"/>
    <property type="project" value="UniProtKB-KW"/>
</dbReference>
<dbReference type="GO" id="GO:0031640">
    <property type="term" value="P:killing of cells of another organism"/>
    <property type="evidence" value="ECO:0007669"/>
    <property type="project" value="UniProtKB-KW"/>
</dbReference>
<dbReference type="GO" id="GO:0016042">
    <property type="term" value="P:lipid catabolic process"/>
    <property type="evidence" value="ECO:0007669"/>
    <property type="project" value="UniProtKB-KW"/>
</dbReference>
<dbReference type="CDD" id="cd08576">
    <property type="entry name" value="GDPD_like_SMaseD_PLD"/>
    <property type="match status" value="1"/>
</dbReference>
<dbReference type="Gene3D" id="3.20.20.190">
    <property type="entry name" value="Phosphatidylinositol (PI) phosphodiesterase"/>
    <property type="match status" value="1"/>
</dbReference>
<dbReference type="InterPro" id="IPR017946">
    <property type="entry name" value="PLC-like_Pdiesterase_TIM-brl"/>
</dbReference>
<dbReference type="SUPFAM" id="SSF51695">
    <property type="entry name" value="PLC-like phosphodiesterases"/>
    <property type="match status" value="1"/>
</dbReference>
<proteinExistence type="evidence at transcript level"/>
<organism>
    <name type="scientific">Sicarius cf. damarensis (strain GJB-2008)</name>
    <name type="common">Six-eyed sand spider</name>
    <dbReference type="NCBI Taxonomy" id="575956"/>
    <lineage>
        <taxon>Eukaryota</taxon>
        <taxon>Metazoa</taxon>
        <taxon>Ecdysozoa</taxon>
        <taxon>Arthropoda</taxon>
        <taxon>Chelicerata</taxon>
        <taxon>Arachnida</taxon>
        <taxon>Araneae</taxon>
        <taxon>Araneomorphae</taxon>
        <taxon>Haplogynae</taxon>
        <taxon>Scytodoidea</taxon>
        <taxon>Sicariidae</taxon>
        <taxon>Sicarius</taxon>
    </lineage>
</organism>
<protein>
    <recommendedName>
        <fullName evidence="6">Dermonecrotic toxin SdSicTox-betaIIB1bxi</fullName>
        <ecNumber evidence="4">4.6.1.-</ecNumber>
    </recommendedName>
    <alternativeName>
        <fullName>Phospholipase D</fullName>
        <shortName>PLD</shortName>
    </alternativeName>
    <alternativeName>
        <fullName>Sphingomyelin phosphodiesterase D</fullName>
        <shortName>SMD</shortName>
        <shortName>SMase D</shortName>
        <shortName>Sphingomyelinase D</shortName>
    </alternativeName>
</protein>